<feature type="transit peptide" description="Chloroplast" evidence="3">
    <location>
        <begin position="1"/>
        <end position="83"/>
    </location>
</feature>
<feature type="chain" id="PRO_0000333287" description="Serotonin N-acetyltransferase 1, chloroplastic">
    <location>
        <begin position="84"/>
        <end position="254"/>
    </location>
</feature>
<feature type="domain" description="N-acetyltransferase" evidence="4">
    <location>
        <begin position="119"/>
        <end position="254"/>
    </location>
</feature>
<comment type="function">
    <text evidence="1 2">Catalyzes the N-acetylation of serotonin into N-acetylserotonin, the penultimate step in the synthesis of melatonin. Catalyzes in vitro the N-acetylation of tryptamine to produce N-acetyltryptamine, 5-methoxytryptamine to produce melatonin and tyramine to produce N-acetyltyramine (By similarity). Acetyltransferase required for geminivirus infection and systemic spread (By similarity).</text>
</comment>
<comment type="catalytic activity">
    <reaction evidence="1">
        <text>a 2-arylethylamine + acetyl-CoA = an N-acetyl-2-arylethylamine + CoA + H(+)</text>
        <dbReference type="Rhea" id="RHEA:20497"/>
        <dbReference type="ChEBI" id="CHEBI:15378"/>
        <dbReference type="ChEBI" id="CHEBI:55469"/>
        <dbReference type="ChEBI" id="CHEBI:57287"/>
        <dbReference type="ChEBI" id="CHEBI:57288"/>
        <dbReference type="ChEBI" id="CHEBI:77827"/>
        <dbReference type="EC" id="2.3.1.87"/>
    </reaction>
</comment>
<comment type="pathway">
    <text evidence="5">Aromatic compound metabolism; melatonin biosynthesis; melatonin from serotonin: step 1/2.</text>
</comment>
<comment type="subcellular location">
    <subcellularLocation>
        <location evidence="1">Plastid</location>
        <location evidence="1">Chloroplast</location>
    </subcellularLocation>
    <subcellularLocation>
        <location evidence="2">Nucleus</location>
    </subcellularLocation>
</comment>
<reference key="1">
    <citation type="journal article" date="2005" name="PLoS Biol.">
        <title>The genomes of Oryza sativa: a history of duplications.</title>
        <authorList>
            <person name="Yu J."/>
            <person name="Wang J."/>
            <person name="Lin W."/>
            <person name="Li S."/>
            <person name="Li H."/>
            <person name="Zhou J."/>
            <person name="Ni P."/>
            <person name="Dong W."/>
            <person name="Hu S."/>
            <person name="Zeng C."/>
            <person name="Zhang J."/>
            <person name="Zhang Y."/>
            <person name="Li R."/>
            <person name="Xu Z."/>
            <person name="Li S."/>
            <person name="Li X."/>
            <person name="Zheng H."/>
            <person name="Cong L."/>
            <person name="Lin L."/>
            <person name="Yin J."/>
            <person name="Geng J."/>
            <person name="Li G."/>
            <person name="Shi J."/>
            <person name="Liu J."/>
            <person name="Lv H."/>
            <person name="Li J."/>
            <person name="Wang J."/>
            <person name="Deng Y."/>
            <person name="Ran L."/>
            <person name="Shi X."/>
            <person name="Wang X."/>
            <person name="Wu Q."/>
            <person name="Li C."/>
            <person name="Ren X."/>
            <person name="Wang J."/>
            <person name="Wang X."/>
            <person name="Li D."/>
            <person name="Liu D."/>
            <person name="Zhang X."/>
            <person name="Ji Z."/>
            <person name="Zhao W."/>
            <person name="Sun Y."/>
            <person name="Zhang Z."/>
            <person name="Bao J."/>
            <person name="Han Y."/>
            <person name="Dong L."/>
            <person name="Ji J."/>
            <person name="Chen P."/>
            <person name="Wu S."/>
            <person name="Liu J."/>
            <person name="Xiao Y."/>
            <person name="Bu D."/>
            <person name="Tan J."/>
            <person name="Yang L."/>
            <person name="Ye C."/>
            <person name="Zhang J."/>
            <person name="Xu J."/>
            <person name="Zhou Y."/>
            <person name="Yu Y."/>
            <person name="Zhang B."/>
            <person name="Zhuang S."/>
            <person name="Wei H."/>
            <person name="Liu B."/>
            <person name="Lei M."/>
            <person name="Yu H."/>
            <person name="Li Y."/>
            <person name="Xu H."/>
            <person name="Wei S."/>
            <person name="He X."/>
            <person name="Fang L."/>
            <person name="Zhang Z."/>
            <person name="Zhang Y."/>
            <person name="Huang X."/>
            <person name="Su Z."/>
            <person name="Tong W."/>
            <person name="Li J."/>
            <person name="Tong Z."/>
            <person name="Li S."/>
            <person name="Ye J."/>
            <person name="Wang L."/>
            <person name="Fang L."/>
            <person name="Lei T."/>
            <person name="Chen C.-S."/>
            <person name="Chen H.-C."/>
            <person name="Xu Z."/>
            <person name="Li H."/>
            <person name="Huang H."/>
            <person name="Zhang F."/>
            <person name="Xu H."/>
            <person name="Li N."/>
            <person name="Zhao C."/>
            <person name="Li S."/>
            <person name="Dong L."/>
            <person name="Huang Y."/>
            <person name="Li L."/>
            <person name="Xi Y."/>
            <person name="Qi Q."/>
            <person name="Li W."/>
            <person name="Zhang B."/>
            <person name="Hu W."/>
            <person name="Zhang Y."/>
            <person name="Tian X."/>
            <person name="Jiao Y."/>
            <person name="Liang X."/>
            <person name="Jin J."/>
            <person name="Gao L."/>
            <person name="Zheng W."/>
            <person name="Hao B."/>
            <person name="Liu S.-M."/>
            <person name="Wang W."/>
            <person name="Yuan L."/>
            <person name="Cao M."/>
            <person name="McDermott J."/>
            <person name="Samudrala R."/>
            <person name="Wang J."/>
            <person name="Wong G.K.-S."/>
            <person name="Yang H."/>
        </authorList>
    </citation>
    <scope>NUCLEOTIDE SEQUENCE [LARGE SCALE GENOMIC DNA]</scope>
    <source>
        <strain>cv. 93-11</strain>
    </source>
</reference>
<protein>
    <recommendedName>
        <fullName evidence="5">Serotonin N-acetyltransferase 1, chloroplastic</fullName>
        <shortName evidence="5">OsSNAT1</shortName>
        <ecNumber evidence="5">2.3.1.87</ecNumber>
    </recommendedName>
    <alternativeName>
        <fullName evidence="5">Nuclear shuttle protein-interacting protein homolog</fullName>
    </alternativeName>
    <alternativeName>
        <fullName>Probable acetyltransferase NSI</fullName>
        <ecNumber>2.3.1.-</ecNumber>
    </alternativeName>
</protein>
<evidence type="ECO:0000250" key="1">
    <source>
        <dbReference type="UniProtKB" id="Q5KQI6"/>
    </source>
</evidence>
<evidence type="ECO:0000250" key="2">
    <source>
        <dbReference type="UniProtKB" id="Q7X9V3"/>
    </source>
</evidence>
<evidence type="ECO:0000255" key="3"/>
<evidence type="ECO:0000255" key="4">
    <source>
        <dbReference type="PROSITE-ProRule" id="PRU00532"/>
    </source>
</evidence>
<evidence type="ECO:0000305" key="5"/>
<evidence type="ECO:0000312" key="6">
    <source>
        <dbReference type="EMBL" id="EEC79409.1"/>
    </source>
</evidence>
<dbReference type="EC" id="2.3.1.87" evidence="5"/>
<dbReference type="EC" id="2.3.1.-"/>
<dbReference type="EMBL" id="CM000130">
    <property type="protein sequence ID" value="EEC79409.1"/>
    <property type="molecule type" value="Genomic_DNA"/>
</dbReference>
<dbReference type="SMR" id="A2Y5T7"/>
<dbReference type="STRING" id="39946.A2Y5T7"/>
<dbReference type="EnsemblPlants" id="BGIOSGA020059-TA">
    <property type="protein sequence ID" value="BGIOSGA020059-PA"/>
    <property type="gene ID" value="BGIOSGA020059"/>
</dbReference>
<dbReference type="Gramene" id="BGIOSGA020059-TA">
    <property type="protein sequence ID" value="BGIOSGA020059-PA"/>
    <property type="gene ID" value="BGIOSGA020059"/>
</dbReference>
<dbReference type="OMA" id="QALCDKT"/>
<dbReference type="UniPathway" id="UPA00837">
    <property type="reaction ID" value="UER00815"/>
</dbReference>
<dbReference type="Proteomes" id="UP000007015">
    <property type="component" value="Chromosome 5"/>
</dbReference>
<dbReference type="GO" id="GO:0009507">
    <property type="term" value="C:chloroplast"/>
    <property type="evidence" value="ECO:0007669"/>
    <property type="project" value="UniProtKB-SubCell"/>
</dbReference>
<dbReference type="GO" id="GO:0005634">
    <property type="term" value="C:nucleus"/>
    <property type="evidence" value="ECO:0007669"/>
    <property type="project" value="UniProtKB-SubCell"/>
</dbReference>
<dbReference type="GO" id="GO:0004059">
    <property type="term" value="F:aralkylamine N-acetyltransferase activity"/>
    <property type="evidence" value="ECO:0007669"/>
    <property type="project" value="UniProtKB-EC"/>
</dbReference>
<dbReference type="GO" id="GO:0004468">
    <property type="term" value="F:L-lysine N-acetyltransferase activity, acting on acetyl phosphate as donor"/>
    <property type="evidence" value="ECO:0007669"/>
    <property type="project" value="EnsemblPlants"/>
</dbReference>
<dbReference type="GO" id="GO:0007623">
    <property type="term" value="P:circadian rhythm"/>
    <property type="evidence" value="ECO:0007669"/>
    <property type="project" value="EnsemblPlants"/>
</dbReference>
<dbReference type="GO" id="GO:0050832">
    <property type="term" value="P:defense response to fungus"/>
    <property type="evidence" value="ECO:0007669"/>
    <property type="project" value="EnsemblPlants"/>
</dbReference>
<dbReference type="GO" id="GO:0030187">
    <property type="term" value="P:melatonin biosynthetic process"/>
    <property type="evidence" value="ECO:0007669"/>
    <property type="project" value="UniProtKB-UniPathway"/>
</dbReference>
<dbReference type="GO" id="GO:0048354">
    <property type="term" value="P:mucilage biosynthetic process involved in seed coat development"/>
    <property type="evidence" value="ECO:0007669"/>
    <property type="project" value="EnsemblPlants"/>
</dbReference>
<dbReference type="GO" id="GO:0010187">
    <property type="term" value="P:negative regulation of seed germination"/>
    <property type="evidence" value="ECO:0007669"/>
    <property type="project" value="EnsemblPlants"/>
</dbReference>
<dbReference type="GO" id="GO:0062055">
    <property type="term" value="P:photosynthetic state transition"/>
    <property type="evidence" value="ECO:0007669"/>
    <property type="project" value="EnsemblPlants"/>
</dbReference>
<dbReference type="GO" id="GO:0006515">
    <property type="term" value="P:protein quality control for misfolded or incompletely synthesized proteins"/>
    <property type="evidence" value="ECO:0007669"/>
    <property type="project" value="EnsemblPlants"/>
</dbReference>
<dbReference type="GO" id="GO:0031537">
    <property type="term" value="P:regulation of anthocyanin metabolic process"/>
    <property type="evidence" value="ECO:0007669"/>
    <property type="project" value="EnsemblPlants"/>
</dbReference>
<dbReference type="GO" id="GO:2000028">
    <property type="term" value="P:regulation of photoperiodism, flowering"/>
    <property type="evidence" value="ECO:0007669"/>
    <property type="project" value="EnsemblPlants"/>
</dbReference>
<dbReference type="GO" id="GO:2000904">
    <property type="term" value="P:regulation of starch metabolic process"/>
    <property type="evidence" value="ECO:0007669"/>
    <property type="project" value="EnsemblPlants"/>
</dbReference>
<dbReference type="GO" id="GO:0090333">
    <property type="term" value="P:regulation of stomatal closure"/>
    <property type="evidence" value="ECO:0007669"/>
    <property type="project" value="EnsemblPlants"/>
</dbReference>
<dbReference type="GO" id="GO:0009409">
    <property type="term" value="P:response to cold"/>
    <property type="evidence" value="ECO:0007669"/>
    <property type="project" value="EnsemblPlants"/>
</dbReference>
<dbReference type="GO" id="GO:0009644">
    <property type="term" value="P:response to high light intensity"/>
    <property type="evidence" value="ECO:0007669"/>
    <property type="project" value="EnsemblPlants"/>
</dbReference>
<dbReference type="GO" id="GO:1904880">
    <property type="term" value="P:response to hydrogen sulfide"/>
    <property type="evidence" value="ECO:0007669"/>
    <property type="project" value="EnsemblPlants"/>
</dbReference>
<dbReference type="GO" id="GO:0010555">
    <property type="term" value="P:response to mannitol"/>
    <property type="evidence" value="ECO:0007669"/>
    <property type="project" value="EnsemblPlants"/>
</dbReference>
<dbReference type="GO" id="GO:0006970">
    <property type="term" value="P:response to osmotic stress"/>
    <property type="evidence" value="ECO:0007669"/>
    <property type="project" value="EnsemblPlants"/>
</dbReference>
<dbReference type="GO" id="GO:0010344">
    <property type="term" value="P:seed oilbody biogenesis"/>
    <property type="evidence" value="ECO:0007669"/>
    <property type="project" value="EnsemblPlants"/>
</dbReference>
<dbReference type="GO" id="GO:0042428">
    <property type="term" value="P:serotonin metabolic process"/>
    <property type="evidence" value="ECO:0007669"/>
    <property type="project" value="EnsemblPlants"/>
</dbReference>
<dbReference type="GO" id="GO:0010027">
    <property type="term" value="P:thylakoid membrane organization"/>
    <property type="evidence" value="ECO:0007669"/>
    <property type="project" value="EnsemblPlants"/>
</dbReference>
<dbReference type="GO" id="GO:0046739">
    <property type="term" value="P:transport of virus in multicellular host"/>
    <property type="evidence" value="ECO:0007669"/>
    <property type="project" value="EnsemblPlants"/>
</dbReference>
<dbReference type="CDD" id="cd04301">
    <property type="entry name" value="NAT_SF"/>
    <property type="match status" value="1"/>
</dbReference>
<dbReference type="FunFam" id="3.40.630.30:FF:000059">
    <property type="entry name" value="Putative acetyltransferase NSI"/>
    <property type="match status" value="1"/>
</dbReference>
<dbReference type="Gene3D" id="3.40.630.30">
    <property type="match status" value="1"/>
</dbReference>
<dbReference type="InterPro" id="IPR016181">
    <property type="entry name" value="Acyl_CoA_acyltransferase"/>
</dbReference>
<dbReference type="InterPro" id="IPR000182">
    <property type="entry name" value="GNAT_dom"/>
</dbReference>
<dbReference type="InterPro" id="IPR045039">
    <property type="entry name" value="NSI-like"/>
</dbReference>
<dbReference type="PANTHER" id="PTHR43626">
    <property type="entry name" value="ACYL-COA N-ACYLTRANSFERASE"/>
    <property type="match status" value="1"/>
</dbReference>
<dbReference type="PANTHER" id="PTHR43626:SF4">
    <property type="entry name" value="GCN5-RELATED N-ACETYLTRANSFERASE 2, CHLOROPLASTIC"/>
    <property type="match status" value="1"/>
</dbReference>
<dbReference type="Pfam" id="PF00583">
    <property type="entry name" value="Acetyltransf_1"/>
    <property type="match status" value="1"/>
</dbReference>
<dbReference type="SUPFAM" id="SSF55729">
    <property type="entry name" value="Acyl-CoA N-acyltransferases (Nat)"/>
    <property type="match status" value="1"/>
</dbReference>
<dbReference type="PROSITE" id="PS51186">
    <property type="entry name" value="GNAT"/>
    <property type="match status" value="1"/>
</dbReference>
<proteinExistence type="inferred from homology"/>
<gene>
    <name evidence="5" type="primary">SNAT1</name>
    <name evidence="5" type="synonym">NSI</name>
    <name evidence="5" type="ORF">OsI_019680</name>
    <name evidence="6" type="ORF">OsI_20361</name>
</gene>
<accession>A2Y5T7</accession>
<accession>B8AZA9</accession>
<sequence>MASAASASASAVVTPSSFRCVPTASCGLGARGKAPAPRRLLHDHAQGKKRAAATWSLKAGLWDSLRSGFLKSNNSTETVEPPSAPIEEEEPLPEELVLLERTLADGSTEQIIFSSAGDVNVYDLQALCDKVGWPRRPLTKIAASLRNSYLVATLHSVTTPSKAEGEERKQLIGMARATSDHAFNATIWDVLVDPSYQGQGLGKALMEKVIRTLLQRDISNITLFADNKVVDFYKNLGFEADPQGIKGMFWYPRF</sequence>
<keyword id="KW-0012">Acyltransferase</keyword>
<keyword id="KW-0150">Chloroplast</keyword>
<keyword id="KW-0471">Melatonin biosynthesis</keyword>
<keyword id="KW-0539">Nucleus</keyword>
<keyword id="KW-0934">Plastid</keyword>
<keyword id="KW-1185">Reference proteome</keyword>
<keyword id="KW-0808">Transferase</keyword>
<keyword id="KW-0809">Transit peptide</keyword>
<organism>
    <name type="scientific">Oryza sativa subsp. indica</name>
    <name type="common">Rice</name>
    <dbReference type="NCBI Taxonomy" id="39946"/>
    <lineage>
        <taxon>Eukaryota</taxon>
        <taxon>Viridiplantae</taxon>
        <taxon>Streptophyta</taxon>
        <taxon>Embryophyta</taxon>
        <taxon>Tracheophyta</taxon>
        <taxon>Spermatophyta</taxon>
        <taxon>Magnoliopsida</taxon>
        <taxon>Liliopsida</taxon>
        <taxon>Poales</taxon>
        <taxon>Poaceae</taxon>
        <taxon>BOP clade</taxon>
        <taxon>Oryzoideae</taxon>
        <taxon>Oryzeae</taxon>
        <taxon>Oryzinae</taxon>
        <taxon>Oryza</taxon>
        <taxon>Oryza sativa</taxon>
    </lineage>
</organism>
<name>SNAT1_ORYSI</name>